<feature type="chain" id="PRO_0000316592" description="GDT1-like protein C186.05c">
    <location>
        <begin position="1"/>
        <end position="262"/>
    </location>
</feature>
<feature type="transmembrane region" description="Helical" evidence="1">
    <location>
        <begin position="31"/>
        <end position="51"/>
    </location>
</feature>
<feature type="transmembrane region" description="Helical" evidence="1">
    <location>
        <begin position="57"/>
        <end position="77"/>
    </location>
</feature>
<feature type="transmembrane region" description="Helical" evidence="1">
    <location>
        <begin position="83"/>
        <end position="103"/>
    </location>
</feature>
<feature type="transmembrane region" description="Helical" evidence="1">
    <location>
        <begin position="208"/>
        <end position="228"/>
    </location>
</feature>
<feature type="transmembrane region" description="Helical" evidence="1">
    <location>
        <begin position="242"/>
        <end position="262"/>
    </location>
</feature>
<comment type="subcellular location">
    <subcellularLocation>
        <location evidence="2">Endoplasmic reticulum membrane</location>
        <topology evidence="2">Multi-pass membrane protein</topology>
    </subcellularLocation>
</comment>
<comment type="similarity">
    <text evidence="3">Belongs to the GDT1 family.</text>
</comment>
<reference key="1">
    <citation type="journal article" date="2002" name="Nature">
        <title>The genome sequence of Schizosaccharomyces pombe.</title>
        <authorList>
            <person name="Wood V."/>
            <person name="Gwilliam R."/>
            <person name="Rajandream M.A."/>
            <person name="Lyne M.H."/>
            <person name="Lyne R."/>
            <person name="Stewart A."/>
            <person name="Sgouros J.G."/>
            <person name="Peat N."/>
            <person name="Hayles J."/>
            <person name="Baker S.G."/>
            <person name="Basham D."/>
            <person name="Bowman S."/>
            <person name="Brooks K."/>
            <person name="Brown D."/>
            <person name="Brown S."/>
            <person name="Chillingworth T."/>
            <person name="Churcher C.M."/>
            <person name="Collins M."/>
            <person name="Connor R."/>
            <person name="Cronin A."/>
            <person name="Davis P."/>
            <person name="Feltwell T."/>
            <person name="Fraser A."/>
            <person name="Gentles S."/>
            <person name="Goble A."/>
            <person name="Hamlin N."/>
            <person name="Harris D.E."/>
            <person name="Hidalgo J."/>
            <person name="Hodgson G."/>
            <person name="Holroyd S."/>
            <person name="Hornsby T."/>
            <person name="Howarth S."/>
            <person name="Huckle E.J."/>
            <person name="Hunt S."/>
            <person name="Jagels K."/>
            <person name="James K.D."/>
            <person name="Jones L."/>
            <person name="Jones M."/>
            <person name="Leather S."/>
            <person name="McDonald S."/>
            <person name="McLean J."/>
            <person name="Mooney P."/>
            <person name="Moule S."/>
            <person name="Mungall K.L."/>
            <person name="Murphy L.D."/>
            <person name="Niblett D."/>
            <person name="Odell C."/>
            <person name="Oliver K."/>
            <person name="O'Neil S."/>
            <person name="Pearson D."/>
            <person name="Quail M.A."/>
            <person name="Rabbinowitsch E."/>
            <person name="Rutherford K.M."/>
            <person name="Rutter S."/>
            <person name="Saunders D."/>
            <person name="Seeger K."/>
            <person name="Sharp S."/>
            <person name="Skelton J."/>
            <person name="Simmonds M.N."/>
            <person name="Squares R."/>
            <person name="Squares S."/>
            <person name="Stevens K."/>
            <person name="Taylor K."/>
            <person name="Taylor R.G."/>
            <person name="Tivey A."/>
            <person name="Walsh S.V."/>
            <person name="Warren T."/>
            <person name="Whitehead S."/>
            <person name="Woodward J.R."/>
            <person name="Volckaert G."/>
            <person name="Aert R."/>
            <person name="Robben J."/>
            <person name="Grymonprez B."/>
            <person name="Weltjens I."/>
            <person name="Vanstreels E."/>
            <person name="Rieger M."/>
            <person name="Schaefer M."/>
            <person name="Mueller-Auer S."/>
            <person name="Gabel C."/>
            <person name="Fuchs M."/>
            <person name="Duesterhoeft A."/>
            <person name="Fritzc C."/>
            <person name="Holzer E."/>
            <person name="Moestl D."/>
            <person name="Hilbert H."/>
            <person name="Borzym K."/>
            <person name="Langer I."/>
            <person name="Beck A."/>
            <person name="Lehrach H."/>
            <person name="Reinhardt R."/>
            <person name="Pohl T.M."/>
            <person name="Eger P."/>
            <person name="Zimmermann W."/>
            <person name="Wedler H."/>
            <person name="Wambutt R."/>
            <person name="Purnelle B."/>
            <person name="Goffeau A."/>
            <person name="Cadieu E."/>
            <person name="Dreano S."/>
            <person name="Gloux S."/>
            <person name="Lelaure V."/>
            <person name="Mottier S."/>
            <person name="Galibert F."/>
            <person name="Aves S.J."/>
            <person name="Xiang Z."/>
            <person name="Hunt C."/>
            <person name="Moore K."/>
            <person name="Hurst S.M."/>
            <person name="Lucas M."/>
            <person name="Rochet M."/>
            <person name="Gaillardin C."/>
            <person name="Tallada V.A."/>
            <person name="Garzon A."/>
            <person name="Thode G."/>
            <person name="Daga R.R."/>
            <person name="Cruzado L."/>
            <person name="Jimenez J."/>
            <person name="Sanchez M."/>
            <person name="del Rey F."/>
            <person name="Benito J."/>
            <person name="Dominguez A."/>
            <person name="Revuelta J.L."/>
            <person name="Moreno S."/>
            <person name="Armstrong J."/>
            <person name="Forsburg S.L."/>
            <person name="Cerutti L."/>
            <person name="Lowe T."/>
            <person name="McCombie W.R."/>
            <person name="Paulsen I."/>
            <person name="Potashkin J."/>
            <person name="Shpakovski G.V."/>
            <person name="Ussery D."/>
            <person name="Barrell B.G."/>
            <person name="Nurse P."/>
        </authorList>
    </citation>
    <scope>NUCLEOTIDE SEQUENCE [LARGE SCALE GENOMIC DNA]</scope>
    <source>
        <strain>972 / ATCC 24843</strain>
    </source>
</reference>
<reference key="2">
    <citation type="journal article" date="2006" name="Nat. Biotechnol.">
        <title>ORFeome cloning and global analysis of protein localization in the fission yeast Schizosaccharomyces pombe.</title>
        <authorList>
            <person name="Matsuyama A."/>
            <person name="Arai R."/>
            <person name="Yashiroda Y."/>
            <person name="Shirai A."/>
            <person name="Kamata A."/>
            <person name="Sekido S."/>
            <person name="Kobayashi Y."/>
            <person name="Hashimoto A."/>
            <person name="Hamamoto M."/>
            <person name="Hiraoka Y."/>
            <person name="Horinouchi S."/>
            <person name="Yoshida M."/>
        </authorList>
    </citation>
    <scope>SUBCELLULAR LOCATION [LARGE SCALE ANALYSIS]</scope>
</reference>
<gene>
    <name type="ORF">SPAC186.05c</name>
</gene>
<accession>Q9P7Q0</accession>
<sequence>MINVESPLNLETTLGSLQFSHGSVQNIGMSISMIIGCELGDKSFIVTALLAYQYGRASVFFGSYLALFFMTSFAVLVGRAAPFLFPKSITHILGGTLFLIFGVKMLKESKEVRESQQSLENEFDKVEKIIVNEEDMKKTLELGLPASNRSSSTLKDKFFKVFSMSCFKNLFSKKFSRAFIKAFALIFVSELGDRSQIATIVMSAKEKVLDVFIGVNIGHMLCTMVAVIVGRYISNKIEMYKVLFFGGIVFMIFGILYIFQGF</sequence>
<proteinExistence type="inferred from homology"/>
<keyword id="KW-0256">Endoplasmic reticulum</keyword>
<keyword id="KW-0472">Membrane</keyword>
<keyword id="KW-1185">Reference proteome</keyword>
<keyword id="KW-0812">Transmembrane</keyword>
<keyword id="KW-1133">Transmembrane helix</keyword>
<dbReference type="EMBL" id="CU329670">
    <property type="protein sequence ID" value="CAB75869.1"/>
    <property type="molecule type" value="Genomic_DNA"/>
</dbReference>
<dbReference type="PIR" id="T50132">
    <property type="entry name" value="T50132"/>
</dbReference>
<dbReference type="SMR" id="Q9P7Q0"/>
<dbReference type="BioGRID" id="279030">
    <property type="interactions" value="14"/>
</dbReference>
<dbReference type="FunCoup" id="Q9P7Q0">
    <property type="interactions" value="489"/>
</dbReference>
<dbReference type="STRING" id="284812.Q9P7Q0"/>
<dbReference type="iPTMnet" id="Q9P7Q0"/>
<dbReference type="PaxDb" id="4896-SPAC186.05c.1"/>
<dbReference type="EnsemblFungi" id="SPAC186.05c.1">
    <property type="protein sequence ID" value="SPAC186.05c.1:pep"/>
    <property type="gene ID" value="SPAC186.05c"/>
</dbReference>
<dbReference type="KEGG" id="spo:2542574"/>
<dbReference type="PomBase" id="SPAC186.05c"/>
<dbReference type="VEuPathDB" id="FungiDB:SPAC186.05c"/>
<dbReference type="eggNOG" id="KOG2881">
    <property type="taxonomic scope" value="Eukaryota"/>
</dbReference>
<dbReference type="HOGENOM" id="CLU_040186_0_2_1"/>
<dbReference type="InParanoid" id="Q9P7Q0"/>
<dbReference type="OMA" id="HAIACAM"/>
<dbReference type="PhylomeDB" id="Q9P7Q0"/>
<dbReference type="PRO" id="PR:Q9P7Q0"/>
<dbReference type="Proteomes" id="UP000002485">
    <property type="component" value="Chromosome I"/>
</dbReference>
<dbReference type="GO" id="GO:0005789">
    <property type="term" value="C:endoplasmic reticulum membrane"/>
    <property type="evidence" value="ECO:0007669"/>
    <property type="project" value="UniProtKB-SubCell"/>
</dbReference>
<dbReference type="GO" id="GO:0005794">
    <property type="term" value="C:Golgi apparatus"/>
    <property type="evidence" value="ECO:0000318"/>
    <property type="project" value="GO_Central"/>
</dbReference>
<dbReference type="GO" id="GO:0015085">
    <property type="term" value="F:calcium ion transmembrane transporter activity"/>
    <property type="evidence" value="ECO:0000318"/>
    <property type="project" value="GO_Central"/>
</dbReference>
<dbReference type="GO" id="GO:0015369">
    <property type="term" value="F:calcium:proton antiporter activity"/>
    <property type="evidence" value="ECO:0000304"/>
    <property type="project" value="PomBase"/>
</dbReference>
<dbReference type="GO" id="GO:0005384">
    <property type="term" value="F:manganese ion transmembrane transporter activity"/>
    <property type="evidence" value="ECO:0000318"/>
    <property type="project" value="GO_Central"/>
</dbReference>
<dbReference type="GO" id="GO:0010486">
    <property type="term" value="F:manganese:proton antiporter activity"/>
    <property type="evidence" value="ECO:0000250"/>
    <property type="project" value="PomBase"/>
</dbReference>
<dbReference type="GO" id="GO:0070588">
    <property type="term" value="P:calcium ion transmembrane transport"/>
    <property type="evidence" value="ECO:0000318"/>
    <property type="project" value="GO_Central"/>
</dbReference>
<dbReference type="GO" id="GO:0032468">
    <property type="term" value="P:Golgi calcium ion homeostasis"/>
    <property type="evidence" value="ECO:0000318"/>
    <property type="project" value="GO_Central"/>
</dbReference>
<dbReference type="GO" id="GO:0061856">
    <property type="term" value="P:Golgi calcium ion transmembrane transport"/>
    <property type="evidence" value="ECO:0000304"/>
    <property type="project" value="PomBase"/>
</dbReference>
<dbReference type="GO" id="GO:0032472">
    <property type="term" value="P:Golgi calcium ion transport"/>
    <property type="evidence" value="ECO:0000318"/>
    <property type="project" value="GO_Central"/>
</dbReference>
<dbReference type="GO" id="GO:0071421">
    <property type="term" value="P:manganese ion transmembrane transport"/>
    <property type="evidence" value="ECO:0000318"/>
    <property type="project" value="GO_Central"/>
</dbReference>
<dbReference type="GO" id="GO:1902600">
    <property type="term" value="P:proton transmembrane transport"/>
    <property type="evidence" value="ECO:0000304"/>
    <property type="project" value="PomBase"/>
</dbReference>
<dbReference type="InterPro" id="IPR001727">
    <property type="entry name" value="GDT1-like"/>
</dbReference>
<dbReference type="PANTHER" id="PTHR12608:SF1">
    <property type="entry name" value="TRANSMEMBRANE PROTEIN 165"/>
    <property type="match status" value="1"/>
</dbReference>
<dbReference type="PANTHER" id="PTHR12608">
    <property type="entry name" value="TRANSMEMBRANE PROTEIN HTP-1 RELATED"/>
    <property type="match status" value="1"/>
</dbReference>
<dbReference type="Pfam" id="PF01169">
    <property type="entry name" value="GDT1"/>
    <property type="match status" value="2"/>
</dbReference>
<organism>
    <name type="scientific">Schizosaccharomyces pombe (strain 972 / ATCC 24843)</name>
    <name type="common">Fission yeast</name>
    <dbReference type="NCBI Taxonomy" id="284812"/>
    <lineage>
        <taxon>Eukaryota</taxon>
        <taxon>Fungi</taxon>
        <taxon>Dikarya</taxon>
        <taxon>Ascomycota</taxon>
        <taxon>Taphrinomycotina</taxon>
        <taxon>Schizosaccharomycetes</taxon>
        <taxon>Schizosaccharomycetales</taxon>
        <taxon>Schizosaccharomycetaceae</taxon>
        <taxon>Schizosaccharomyces</taxon>
    </lineage>
</organism>
<name>YLY5_SCHPO</name>
<protein>
    <recommendedName>
        <fullName>GDT1-like protein C186.05c</fullName>
    </recommendedName>
</protein>
<evidence type="ECO:0000255" key="1"/>
<evidence type="ECO:0000269" key="2">
    <source>
    </source>
</evidence>
<evidence type="ECO:0000305" key="3"/>